<organism>
    <name type="scientific">Ralstonia pickettii (strain 12J)</name>
    <dbReference type="NCBI Taxonomy" id="402626"/>
    <lineage>
        <taxon>Bacteria</taxon>
        <taxon>Pseudomonadati</taxon>
        <taxon>Pseudomonadota</taxon>
        <taxon>Betaproteobacteria</taxon>
        <taxon>Burkholderiales</taxon>
        <taxon>Burkholderiaceae</taxon>
        <taxon>Ralstonia</taxon>
    </lineage>
</organism>
<comment type="function">
    <text evidence="1">Catalyzes the radical-mediated insertion of two sulfur atoms into the C-6 and C-8 positions of the octanoyl moiety bound to the lipoyl domains of lipoate-dependent enzymes, thereby converting the octanoylated domains into lipoylated derivatives.</text>
</comment>
<comment type="catalytic activity">
    <reaction evidence="1">
        <text>[[Fe-S] cluster scaffold protein carrying a second [4Fe-4S](2+) cluster] + N(6)-octanoyl-L-lysyl-[protein] + 2 oxidized [2Fe-2S]-[ferredoxin] + 2 S-adenosyl-L-methionine + 4 H(+) = [[Fe-S] cluster scaffold protein] + N(6)-[(R)-dihydrolipoyl]-L-lysyl-[protein] + 4 Fe(3+) + 2 hydrogen sulfide + 2 5'-deoxyadenosine + 2 L-methionine + 2 reduced [2Fe-2S]-[ferredoxin]</text>
        <dbReference type="Rhea" id="RHEA:16585"/>
        <dbReference type="Rhea" id="RHEA-COMP:9928"/>
        <dbReference type="Rhea" id="RHEA-COMP:10000"/>
        <dbReference type="Rhea" id="RHEA-COMP:10001"/>
        <dbReference type="Rhea" id="RHEA-COMP:10475"/>
        <dbReference type="Rhea" id="RHEA-COMP:14568"/>
        <dbReference type="Rhea" id="RHEA-COMP:14569"/>
        <dbReference type="ChEBI" id="CHEBI:15378"/>
        <dbReference type="ChEBI" id="CHEBI:17319"/>
        <dbReference type="ChEBI" id="CHEBI:29034"/>
        <dbReference type="ChEBI" id="CHEBI:29919"/>
        <dbReference type="ChEBI" id="CHEBI:33722"/>
        <dbReference type="ChEBI" id="CHEBI:33737"/>
        <dbReference type="ChEBI" id="CHEBI:33738"/>
        <dbReference type="ChEBI" id="CHEBI:57844"/>
        <dbReference type="ChEBI" id="CHEBI:59789"/>
        <dbReference type="ChEBI" id="CHEBI:78809"/>
        <dbReference type="ChEBI" id="CHEBI:83100"/>
        <dbReference type="EC" id="2.8.1.8"/>
    </reaction>
</comment>
<comment type="cofactor">
    <cofactor evidence="1">
        <name>[4Fe-4S] cluster</name>
        <dbReference type="ChEBI" id="CHEBI:49883"/>
    </cofactor>
    <text evidence="1">Binds 2 [4Fe-4S] clusters per subunit. One cluster is coordinated with 3 cysteines and an exchangeable S-adenosyl-L-methionine.</text>
</comment>
<comment type="pathway">
    <text evidence="1">Protein modification; protein lipoylation via endogenous pathway; protein N(6)-(lipoyl)lysine from octanoyl-[acyl-carrier-protein]: step 2/2.</text>
</comment>
<comment type="subcellular location">
    <subcellularLocation>
        <location evidence="1">Cytoplasm</location>
    </subcellularLocation>
</comment>
<comment type="similarity">
    <text evidence="1">Belongs to the radical SAM superfamily. Lipoyl synthase family.</text>
</comment>
<protein>
    <recommendedName>
        <fullName evidence="1">Lipoyl synthase</fullName>
        <ecNumber evidence="1">2.8.1.8</ecNumber>
    </recommendedName>
    <alternativeName>
        <fullName evidence="1">Lip-syn</fullName>
        <shortName evidence="1">LS</shortName>
    </alternativeName>
    <alternativeName>
        <fullName evidence="1">Lipoate synthase</fullName>
    </alternativeName>
    <alternativeName>
        <fullName evidence="1">Lipoic acid synthase</fullName>
    </alternativeName>
    <alternativeName>
        <fullName evidence="1">Sulfur insertion protein LipA</fullName>
    </alternativeName>
</protein>
<dbReference type="EC" id="2.8.1.8" evidence="1"/>
<dbReference type="EMBL" id="CP001068">
    <property type="protein sequence ID" value="ACD25341.1"/>
    <property type="molecule type" value="Genomic_DNA"/>
</dbReference>
<dbReference type="SMR" id="B2UE01"/>
<dbReference type="STRING" id="402626.Rpic_0178"/>
<dbReference type="KEGG" id="rpi:Rpic_0178"/>
<dbReference type="eggNOG" id="COG0320">
    <property type="taxonomic scope" value="Bacteria"/>
</dbReference>
<dbReference type="HOGENOM" id="CLU_033144_2_1_4"/>
<dbReference type="UniPathway" id="UPA00538">
    <property type="reaction ID" value="UER00593"/>
</dbReference>
<dbReference type="GO" id="GO:0005737">
    <property type="term" value="C:cytoplasm"/>
    <property type="evidence" value="ECO:0007669"/>
    <property type="project" value="UniProtKB-SubCell"/>
</dbReference>
<dbReference type="GO" id="GO:0051539">
    <property type="term" value="F:4 iron, 4 sulfur cluster binding"/>
    <property type="evidence" value="ECO:0007669"/>
    <property type="project" value="UniProtKB-UniRule"/>
</dbReference>
<dbReference type="GO" id="GO:0016992">
    <property type="term" value="F:lipoate synthase activity"/>
    <property type="evidence" value="ECO:0007669"/>
    <property type="project" value="UniProtKB-UniRule"/>
</dbReference>
<dbReference type="GO" id="GO:0046872">
    <property type="term" value="F:metal ion binding"/>
    <property type="evidence" value="ECO:0007669"/>
    <property type="project" value="UniProtKB-KW"/>
</dbReference>
<dbReference type="CDD" id="cd01335">
    <property type="entry name" value="Radical_SAM"/>
    <property type="match status" value="1"/>
</dbReference>
<dbReference type="FunFam" id="3.20.20.70:FF:000040">
    <property type="entry name" value="Lipoyl synthase"/>
    <property type="match status" value="1"/>
</dbReference>
<dbReference type="Gene3D" id="3.20.20.70">
    <property type="entry name" value="Aldolase class I"/>
    <property type="match status" value="1"/>
</dbReference>
<dbReference type="HAMAP" id="MF_00206">
    <property type="entry name" value="Lipoyl_synth"/>
    <property type="match status" value="1"/>
</dbReference>
<dbReference type="InterPro" id="IPR013785">
    <property type="entry name" value="Aldolase_TIM"/>
</dbReference>
<dbReference type="InterPro" id="IPR006638">
    <property type="entry name" value="Elp3/MiaA/NifB-like_rSAM"/>
</dbReference>
<dbReference type="InterPro" id="IPR003698">
    <property type="entry name" value="Lipoyl_synth"/>
</dbReference>
<dbReference type="InterPro" id="IPR007197">
    <property type="entry name" value="rSAM"/>
</dbReference>
<dbReference type="NCBIfam" id="TIGR00510">
    <property type="entry name" value="lipA"/>
    <property type="match status" value="1"/>
</dbReference>
<dbReference type="NCBIfam" id="NF004019">
    <property type="entry name" value="PRK05481.1"/>
    <property type="match status" value="1"/>
</dbReference>
<dbReference type="NCBIfam" id="NF009544">
    <property type="entry name" value="PRK12928.1"/>
    <property type="match status" value="1"/>
</dbReference>
<dbReference type="PANTHER" id="PTHR10949">
    <property type="entry name" value="LIPOYL SYNTHASE"/>
    <property type="match status" value="1"/>
</dbReference>
<dbReference type="PANTHER" id="PTHR10949:SF0">
    <property type="entry name" value="LIPOYL SYNTHASE, MITOCHONDRIAL"/>
    <property type="match status" value="1"/>
</dbReference>
<dbReference type="Pfam" id="PF04055">
    <property type="entry name" value="Radical_SAM"/>
    <property type="match status" value="1"/>
</dbReference>
<dbReference type="PIRSF" id="PIRSF005963">
    <property type="entry name" value="Lipoyl_synth"/>
    <property type="match status" value="1"/>
</dbReference>
<dbReference type="SFLD" id="SFLDF00271">
    <property type="entry name" value="lipoyl_synthase"/>
    <property type="match status" value="1"/>
</dbReference>
<dbReference type="SFLD" id="SFLDG01058">
    <property type="entry name" value="lipoyl_synthase_like"/>
    <property type="match status" value="1"/>
</dbReference>
<dbReference type="SMART" id="SM00729">
    <property type="entry name" value="Elp3"/>
    <property type="match status" value="1"/>
</dbReference>
<dbReference type="SUPFAM" id="SSF102114">
    <property type="entry name" value="Radical SAM enzymes"/>
    <property type="match status" value="1"/>
</dbReference>
<dbReference type="PROSITE" id="PS51918">
    <property type="entry name" value="RADICAL_SAM"/>
    <property type="match status" value="1"/>
</dbReference>
<proteinExistence type="inferred from homology"/>
<accession>B2UE01</accession>
<feature type="chain" id="PRO_1000099623" description="Lipoyl synthase">
    <location>
        <begin position="1"/>
        <end position="333"/>
    </location>
</feature>
<feature type="domain" description="Radical SAM core" evidence="2">
    <location>
        <begin position="91"/>
        <end position="309"/>
    </location>
</feature>
<feature type="region of interest" description="Disordered" evidence="3">
    <location>
        <begin position="1"/>
        <end position="29"/>
    </location>
</feature>
<feature type="binding site" evidence="1">
    <location>
        <position position="80"/>
    </location>
    <ligand>
        <name>[4Fe-4S] cluster</name>
        <dbReference type="ChEBI" id="CHEBI:49883"/>
        <label>1</label>
    </ligand>
</feature>
<feature type="binding site" evidence="1">
    <location>
        <position position="85"/>
    </location>
    <ligand>
        <name>[4Fe-4S] cluster</name>
        <dbReference type="ChEBI" id="CHEBI:49883"/>
        <label>1</label>
    </ligand>
</feature>
<feature type="binding site" evidence="1">
    <location>
        <position position="91"/>
    </location>
    <ligand>
        <name>[4Fe-4S] cluster</name>
        <dbReference type="ChEBI" id="CHEBI:49883"/>
        <label>1</label>
    </ligand>
</feature>
<feature type="binding site" evidence="1">
    <location>
        <position position="106"/>
    </location>
    <ligand>
        <name>[4Fe-4S] cluster</name>
        <dbReference type="ChEBI" id="CHEBI:49883"/>
        <label>2</label>
        <note>4Fe-4S-S-AdoMet</note>
    </ligand>
</feature>
<feature type="binding site" evidence="1">
    <location>
        <position position="110"/>
    </location>
    <ligand>
        <name>[4Fe-4S] cluster</name>
        <dbReference type="ChEBI" id="CHEBI:49883"/>
        <label>2</label>
        <note>4Fe-4S-S-AdoMet</note>
    </ligand>
</feature>
<feature type="binding site" evidence="1">
    <location>
        <position position="113"/>
    </location>
    <ligand>
        <name>[4Fe-4S] cluster</name>
        <dbReference type="ChEBI" id="CHEBI:49883"/>
        <label>2</label>
        <note>4Fe-4S-S-AdoMet</note>
    </ligand>
</feature>
<feature type="binding site" evidence="1">
    <location>
        <position position="320"/>
    </location>
    <ligand>
        <name>[4Fe-4S] cluster</name>
        <dbReference type="ChEBI" id="CHEBI:49883"/>
        <label>1</label>
    </ligand>
</feature>
<evidence type="ECO:0000255" key="1">
    <source>
        <dbReference type="HAMAP-Rule" id="MF_00206"/>
    </source>
</evidence>
<evidence type="ECO:0000255" key="2">
    <source>
        <dbReference type="PROSITE-ProRule" id="PRU01266"/>
    </source>
</evidence>
<evidence type="ECO:0000256" key="3">
    <source>
        <dbReference type="SAM" id="MobiDB-lite"/>
    </source>
</evidence>
<gene>
    <name evidence="1" type="primary">lipA</name>
    <name type="ordered locus">Rpic_0178</name>
</gene>
<reference key="1">
    <citation type="submission" date="2008-05" db="EMBL/GenBank/DDBJ databases">
        <title>Complete sequence of chromosome 1 of Ralstonia pickettii 12J.</title>
        <authorList>
            <person name="Lucas S."/>
            <person name="Copeland A."/>
            <person name="Lapidus A."/>
            <person name="Glavina del Rio T."/>
            <person name="Dalin E."/>
            <person name="Tice H."/>
            <person name="Bruce D."/>
            <person name="Goodwin L."/>
            <person name="Pitluck S."/>
            <person name="Meincke L."/>
            <person name="Brettin T."/>
            <person name="Detter J.C."/>
            <person name="Han C."/>
            <person name="Kuske C.R."/>
            <person name="Schmutz J."/>
            <person name="Larimer F."/>
            <person name="Land M."/>
            <person name="Hauser L."/>
            <person name="Kyrpides N."/>
            <person name="Mikhailova N."/>
            <person name="Marsh T."/>
            <person name="Richardson P."/>
        </authorList>
    </citation>
    <scope>NUCLEOTIDE SEQUENCE [LARGE SCALE GENOMIC DNA]</scope>
    <source>
        <strain>12J</strain>
    </source>
</reference>
<keyword id="KW-0004">4Fe-4S</keyword>
<keyword id="KW-0963">Cytoplasm</keyword>
<keyword id="KW-0408">Iron</keyword>
<keyword id="KW-0411">Iron-sulfur</keyword>
<keyword id="KW-0479">Metal-binding</keyword>
<keyword id="KW-0949">S-adenosyl-L-methionine</keyword>
<keyword id="KW-0808">Transferase</keyword>
<name>LIPA_RALPJ</name>
<sequence>MTDSAAGATEVATPATPSNKPYDATAKQKSLDKTARIPIKIVPAEKLKKPDWIRVRAATGNSRFYEIKDILRANNLVTVCEEASCPNIGECFGKGTATFMIMGDKCTRRCPFCDVGHGRPDPLDVNEPENLAKTIAELKLNYVVITSVDRDDLRDGGAQHYVDCISRTRALSPATRIEVLVPDFRGRLEKALDILQECPPDVMNHNLETVPRLYKQARPGADYAHSLKLLKDFKARNPNVPTKSGLMVGLGETDEEILEVMRDMREHDIDMLTIGQYLAPSGHHLPVLRYVHPDTFKMFEEKAYEMGFTHAAVGAMVRSSYHADQQAHEAGVV</sequence>